<comment type="function">
    <text evidence="1">Involved in the biosynthesis of ADP-glucose, a building block, required in the biosynthesis of maltose-1-phosphate (M1P) and in the elongation reactions to produce linear alpha-1,4-glucans. Catalyzes the reaction between ATP and alpha-D-glucose 1-phosphate (G1P) to produce pyrophosphate and ADP-Glc.</text>
</comment>
<comment type="catalytic activity">
    <reaction evidence="1">
        <text>alpha-D-glucose 1-phosphate + ATP + H(+) = ADP-alpha-D-glucose + diphosphate</text>
        <dbReference type="Rhea" id="RHEA:12120"/>
        <dbReference type="ChEBI" id="CHEBI:15378"/>
        <dbReference type="ChEBI" id="CHEBI:30616"/>
        <dbReference type="ChEBI" id="CHEBI:33019"/>
        <dbReference type="ChEBI" id="CHEBI:57498"/>
        <dbReference type="ChEBI" id="CHEBI:58601"/>
        <dbReference type="EC" id="2.7.7.27"/>
    </reaction>
</comment>
<comment type="pathway">
    <text evidence="2">Capsule biogenesis; capsule polysaccharide biosynthesis.</text>
</comment>
<comment type="pathway">
    <text evidence="1">Glycan biosynthesis; glycogen biosynthesis.</text>
</comment>
<comment type="similarity">
    <text evidence="1">Belongs to the bacterial/plant glucose-1-phosphate adenylyltransferase family.</text>
</comment>
<feature type="chain" id="PRO_1000130491" description="Glucose-1-phosphate adenylyltransferase">
    <location>
        <begin position="1"/>
        <end position="404"/>
    </location>
</feature>
<feature type="binding site" evidence="1">
    <location>
        <position position="99"/>
    </location>
    <ligand>
        <name>alpha-D-glucose 1-phosphate</name>
        <dbReference type="ChEBI" id="CHEBI:58601"/>
    </ligand>
</feature>
<feature type="binding site" evidence="1">
    <location>
        <position position="164"/>
    </location>
    <ligand>
        <name>alpha-D-glucose 1-phosphate</name>
        <dbReference type="ChEBI" id="CHEBI:58601"/>
    </ligand>
</feature>
<feature type="binding site" evidence="1">
    <location>
        <begin position="179"/>
        <end position="180"/>
    </location>
    <ligand>
        <name>alpha-D-glucose 1-phosphate</name>
        <dbReference type="ChEBI" id="CHEBI:58601"/>
    </ligand>
</feature>
<feature type="binding site" evidence="1">
    <location>
        <position position="197"/>
    </location>
    <ligand>
        <name>alpha-D-glucose 1-phosphate</name>
        <dbReference type="ChEBI" id="CHEBI:58601"/>
    </ligand>
</feature>
<gene>
    <name evidence="1" type="primary">glgC</name>
    <name type="ordered locus">MAB_1352</name>
</gene>
<proteinExistence type="inferred from homology"/>
<reference key="1">
    <citation type="journal article" date="2009" name="PLoS ONE">
        <title>Non mycobacterial virulence genes in the genome of the emerging pathogen Mycobacterium abscessus.</title>
        <authorList>
            <person name="Ripoll F."/>
            <person name="Pasek S."/>
            <person name="Schenowitz C."/>
            <person name="Dossat C."/>
            <person name="Barbe V."/>
            <person name="Rottman M."/>
            <person name="Macheras E."/>
            <person name="Heym B."/>
            <person name="Herrmann J.L."/>
            <person name="Daffe M."/>
            <person name="Brosch R."/>
            <person name="Risler J.L."/>
            <person name="Gaillard J.L."/>
        </authorList>
    </citation>
    <scope>NUCLEOTIDE SEQUENCE [LARGE SCALE GENOMIC DNA]</scope>
    <source>
        <strain>ATCC 19977 / DSM 44196 / CCUG 20993 / CIP 104536 / JCM 13569 / NCTC 13031 / TMC 1543 / L948</strain>
    </source>
</reference>
<keyword id="KW-0067">ATP-binding</keyword>
<keyword id="KW-0119">Carbohydrate metabolism</keyword>
<keyword id="KW-0320">Glycogen biosynthesis</keyword>
<keyword id="KW-0321">Glycogen metabolism</keyword>
<keyword id="KW-0547">Nucleotide-binding</keyword>
<keyword id="KW-0548">Nucleotidyltransferase</keyword>
<keyword id="KW-1185">Reference proteome</keyword>
<keyword id="KW-0808">Transferase</keyword>
<organism>
    <name type="scientific">Mycobacteroides abscessus (strain ATCC 19977 / DSM 44196 / CCUG 20993 / CIP 104536 / JCM 13569 / NCTC 13031 / TMC 1543 / L948)</name>
    <name type="common">Mycobacterium abscessus</name>
    <dbReference type="NCBI Taxonomy" id="561007"/>
    <lineage>
        <taxon>Bacteria</taxon>
        <taxon>Bacillati</taxon>
        <taxon>Actinomycetota</taxon>
        <taxon>Actinomycetes</taxon>
        <taxon>Mycobacteriales</taxon>
        <taxon>Mycobacteriaceae</taxon>
        <taxon>Mycobacteroides</taxon>
        <taxon>Mycobacteroides abscessus</taxon>
    </lineage>
</organism>
<sequence length="404" mass="43784">MRASPHVLGIVLAGGEGKRLYPLTADRAKPAVPFGGAYRLIDFVLSNLVNARFLRICVLTQYKSHSLDRHISQNWRLSGLAGEYITPVPAQQRLGPRWYTGSADAIHQSLNLIFDEDPEYIVVFGADHVYRMDPEQMLDFHIESGAAVTVAGIRVPRTEASAFGCIDADDTGRIREFVEKPANPPGTPDDPDAAFVSMGNYIFTTKELIDVIRADADDDHSDHDMGGDIIPRLVADGRAAVYDFNTNLVPGATERDHAYWRDVGTLDAFYDAHMDLVSVHPVFNLYNRRWPIRGESENLAPAKFVNGGSAQESVVGAGSIVSAASVRNSVLSSNVVIDDGAVVEGSVLMPGVRVGRGAVVRHAILDKNVVVGVGEQVGVDIERDRERFNVSAGGVVAVGKGVWI</sequence>
<protein>
    <recommendedName>
        <fullName evidence="1">Glucose-1-phosphate adenylyltransferase</fullName>
        <ecNumber evidence="1">2.7.7.27</ecNumber>
    </recommendedName>
    <alternativeName>
        <fullName evidence="1">ADP-glucose pyrophosphorylase</fullName>
        <shortName evidence="1">ADPGlc PPase</shortName>
    </alternativeName>
    <alternativeName>
        <fullName evidence="1">ADP-glucose synthase</fullName>
    </alternativeName>
</protein>
<accession>B1MLL3</accession>
<name>GLGC_MYCA9</name>
<dbReference type="EC" id="2.7.7.27" evidence="1"/>
<dbReference type="EMBL" id="CU458896">
    <property type="protein sequence ID" value="CAM61440.1"/>
    <property type="molecule type" value="Genomic_DNA"/>
</dbReference>
<dbReference type="RefSeq" id="WP_005059650.1">
    <property type="nucleotide sequence ID" value="NZ_MLCG01000002.1"/>
</dbReference>
<dbReference type="SMR" id="B1MLL3"/>
<dbReference type="GeneID" id="93378298"/>
<dbReference type="KEGG" id="mab:MAB_1352"/>
<dbReference type="UniPathway" id="UPA00164"/>
<dbReference type="UniPathway" id="UPA00934"/>
<dbReference type="Proteomes" id="UP000007137">
    <property type="component" value="Chromosome"/>
</dbReference>
<dbReference type="GO" id="GO:0005524">
    <property type="term" value="F:ATP binding"/>
    <property type="evidence" value="ECO:0007669"/>
    <property type="project" value="UniProtKB-KW"/>
</dbReference>
<dbReference type="GO" id="GO:0008878">
    <property type="term" value="F:glucose-1-phosphate adenylyltransferase activity"/>
    <property type="evidence" value="ECO:0007669"/>
    <property type="project" value="UniProtKB-UniRule"/>
</dbReference>
<dbReference type="GO" id="GO:0045227">
    <property type="term" value="P:capsule polysaccharide biosynthetic process"/>
    <property type="evidence" value="ECO:0007669"/>
    <property type="project" value="UniProtKB-UniPathway"/>
</dbReference>
<dbReference type="GO" id="GO:0005978">
    <property type="term" value="P:glycogen biosynthetic process"/>
    <property type="evidence" value="ECO:0007669"/>
    <property type="project" value="UniProtKB-UniRule"/>
</dbReference>
<dbReference type="CDD" id="cd02508">
    <property type="entry name" value="ADP_Glucose_PP"/>
    <property type="match status" value="1"/>
</dbReference>
<dbReference type="CDD" id="cd04651">
    <property type="entry name" value="LbH_G1P_AT_C"/>
    <property type="match status" value="1"/>
</dbReference>
<dbReference type="FunFam" id="3.90.550.10:FF:000014">
    <property type="entry name" value="Glucose-1-phosphate adenylyltransferase"/>
    <property type="match status" value="1"/>
</dbReference>
<dbReference type="Gene3D" id="2.160.10.10">
    <property type="entry name" value="Hexapeptide repeat proteins"/>
    <property type="match status" value="1"/>
</dbReference>
<dbReference type="Gene3D" id="3.90.550.10">
    <property type="entry name" value="Spore Coat Polysaccharide Biosynthesis Protein SpsA, Chain A"/>
    <property type="match status" value="1"/>
</dbReference>
<dbReference type="HAMAP" id="MF_00624">
    <property type="entry name" value="GlgC"/>
    <property type="match status" value="1"/>
</dbReference>
<dbReference type="InterPro" id="IPR011831">
    <property type="entry name" value="ADP-Glc_PPase"/>
</dbReference>
<dbReference type="InterPro" id="IPR005836">
    <property type="entry name" value="ADP_Glu_pyroP_CS"/>
</dbReference>
<dbReference type="InterPro" id="IPR023049">
    <property type="entry name" value="GlgC_bac"/>
</dbReference>
<dbReference type="InterPro" id="IPR056818">
    <property type="entry name" value="GlmU/GlgC-like_hexapep"/>
</dbReference>
<dbReference type="InterPro" id="IPR005835">
    <property type="entry name" value="NTP_transferase_dom"/>
</dbReference>
<dbReference type="InterPro" id="IPR029044">
    <property type="entry name" value="Nucleotide-diphossugar_trans"/>
</dbReference>
<dbReference type="InterPro" id="IPR011004">
    <property type="entry name" value="Trimer_LpxA-like_sf"/>
</dbReference>
<dbReference type="NCBIfam" id="TIGR02091">
    <property type="entry name" value="glgC"/>
    <property type="match status" value="1"/>
</dbReference>
<dbReference type="NCBIfam" id="NF001947">
    <property type="entry name" value="PRK00725.1"/>
    <property type="match status" value="1"/>
</dbReference>
<dbReference type="NCBIfam" id="NF002023">
    <property type="entry name" value="PRK00844.1"/>
    <property type="match status" value="1"/>
</dbReference>
<dbReference type="PANTHER" id="PTHR43523:SF2">
    <property type="entry name" value="GLUCOSE-1-PHOSPHATE ADENYLYLTRANSFERASE"/>
    <property type="match status" value="1"/>
</dbReference>
<dbReference type="PANTHER" id="PTHR43523">
    <property type="entry name" value="GLUCOSE-1-PHOSPHATE ADENYLYLTRANSFERASE-RELATED"/>
    <property type="match status" value="1"/>
</dbReference>
<dbReference type="Pfam" id="PF24894">
    <property type="entry name" value="Hexapep_GlmU"/>
    <property type="match status" value="1"/>
</dbReference>
<dbReference type="Pfam" id="PF00483">
    <property type="entry name" value="NTP_transferase"/>
    <property type="match status" value="1"/>
</dbReference>
<dbReference type="SUPFAM" id="SSF53448">
    <property type="entry name" value="Nucleotide-diphospho-sugar transferases"/>
    <property type="match status" value="1"/>
</dbReference>
<dbReference type="SUPFAM" id="SSF51161">
    <property type="entry name" value="Trimeric LpxA-like enzymes"/>
    <property type="match status" value="1"/>
</dbReference>
<dbReference type="PROSITE" id="PS00808">
    <property type="entry name" value="ADP_GLC_PYROPHOSPH_1"/>
    <property type="match status" value="1"/>
</dbReference>
<dbReference type="PROSITE" id="PS00809">
    <property type="entry name" value="ADP_GLC_PYROPHOSPH_2"/>
    <property type="match status" value="1"/>
</dbReference>
<dbReference type="PROSITE" id="PS00810">
    <property type="entry name" value="ADP_GLC_PYROPHOSPH_3"/>
    <property type="match status" value="1"/>
</dbReference>
<evidence type="ECO:0000255" key="1">
    <source>
        <dbReference type="HAMAP-Rule" id="MF_00624"/>
    </source>
</evidence>
<evidence type="ECO:0000305" key="2"/>